<reference key="1">
    <citation type="journal article" date="2012" name="BMC Microbiol.">
        <title>Genome sequence of Desulfitobacterium hafniense DCB-2, a Gram-positive anaerobe capable of dehalogenation and metal reduction.</title>
        <authorList>
            <person name="Kim S.H."/>
            <person name="Harzman C."/>
            <person name="Davis J.K."/>
            <person name="Hutcheson R."/>
            <person name="Broderick J.B."/>
            <person name="Marsh T.L."/>
            <person name="Tiedje J.M."/>
        </authorList>
    </citation>
    <scope>NUCLEOTIDE SEQUENCE [LARGE SCALE GENOMIC DNA]</scope>
    <source>
        <strain>DSM 10664 / DCB-2</strain>
    </source>
</reference>
<protein>
    <recommendedName>
        <fullName evidence="1">Lipoprotein signal peptidase</fullName>
        <ecNumber evidence="1">3.4.23.36</ecNumber>
    </recommendedName>
    <alternativeName>
        <fullName evidence="1">Prolipoprotein signal peptidase</fullName>
    </alternativeName>
    <alternativeName>
        <fullName evidence="1">Signal peptidase II</fullName>
        <shortName evidence="1">SPase II</shortName>
    </alternativeName>
</protein>
<evidence type="ECO:0000255" key="1">
    <source>
        <dbReference type="HAMAP-Rule" id="MF_00161"/>
    </source>
</evidence>
<gene>
    <name evidence="1" type="primary">lspA</name>
    <name type="ordered locus">Dhaf_4023</name>
</gene>
<accession>B8FT17</accession>
<proteinExistence type="inferred from homology"/>
<comment type="function">
    <text evidence="1">This protein specifically catalyzes the removal of signal peptides from prolipoproteins.</text>
</comment>
<comment type="catalytic activity">
    <reaction evidence="1">
        <text>Release of signal peptides from bacterial membrane prolipoproteins. Hydrolyzes -Xaa-Yaa-Zaa-|-(S,diacylglyceryl)Cys-, in which Xaa is hydrophobic (preferably Leu), and Yaa (Ala or Ser) and Zaa (Gly or Ala) have small, neutral side chains.</text>
        <dbReference type="EC" id="3.4.23.36"/>
    </reaction>
</comment>
<comment type="pathway">
    <text evidence="1">Protein modification; lipoprotein biosynthesis (signal peptide cleavage).</text>
</comment>
<comment type="subcellular location">
    <subcellularLocation>
        <location evidence="1">Cell membrane</location>
        <topology evidence="1">Multi-pass membrane protein</topology>
    </subcellularLocation>
</comment>
<comment type="similarity">
    <text evidence="1">Belongs to the peptidase A8 family.</text>
</comment>
<name>LSPA_DESHD</name>
<sequence length="151" mass="16966">MLIWITIGIVWAIDRVLKVLIQGNFVVGESVPVIPDFFHLTYVLNPGAAFGLLPGRTWIFIPAAIIVCAGIIYAQFKIPRQEWLMRLTLGLIGGGALGNLYDRLFIGKVVDYLDFQIWPFVFNFADSAIVVGVGLLMILMLLEDRKERKTE</sequence>
<feature type="chain" id="PRO_1000123494" description="Lipoprotein signal peptidase">
    <location>
        <begin position="1"/>
        <end position="151"/>
    </location>
</feature>
<feature type="transmembrane region" description="Helical" evidence="1">
    <location>
        <begin position="33"/>
        <end position="53"/>
    </location>
</feature>
<feature type="transmembrane region" description="Helical" evidence="1">
    <location>
        <begin position="58"/>
        <end position="78"/>
    </location>
</feature>
<feature type="transmembrane region" description="Helical" evidence="1">
    <location>
        <begin position="87"/>
        <end position="107"/>
    </location>
</feature>
<feature type="transmembrane region" description="Helical" evidence="1">
    <location>
        <begin position="120"/>
        <end position="140"/>
    </location>
</feature>
<feature type="active site" evidence="1">
    <location>
        <position position="111"/>
    </location>
</feature>
<feature type="active site" evidence="1">
    <location>
        <position position="126"/>
    </location>
</feature>
<organism>
    <name type="scientific">Desulfitobacterium hafniense (strain DSM 10664 / DCB-2)</name>
    <dbReference type="NCBI Taxonomy" id="272564"/>
    <lineage>
        <taxon>Bacteria</taxon>
        <taxon>Bacillati</taxon>
        <taxon>Bacillota</taxon>
        <taxon>Clostridia</taxon>
        <taxon>Eubacteriales</taxon>
        <taxon>Desulfitobacteriaceae</taxon>
        <taxon>Desulfitobacterium</taxon>
    </lineage>
</organism>
<keyword id="KW-0064">Aspartyl protease</keyword>
<keyword id="KW-1003">Cell membrane</keyword>
<keyword id="KW-0378">Hydrolase</keyword>
<keyword id="KW-0472">Membrane</keyword>
<keyword id="KW-0645">Protease</keyword>
<keyword id="KW-0812">Transmembrane</keyword>
<keyword id="KW-1133">Transmembrane helix</keyword>
<dbReference type="EC" id="3.4.23.36" evidence="1"/>
<dbReference type="EMBL" id="CP001336">
    <property type="protein sequence ID" value="ACL22033.1"/>
    <property type="molecule type" value="Genomic_DNA"/>
</dbReference>
<dbReference type="RefSeq" id="WP_011460664.1">
    <property type="nucleotide sequence ID" value="NC_011830.1"/>
</dbReference>
<dbReference type="SMR" id="B8FT17"/>
<dbReference type="KEGG" id="dhd:Dhaf_4023"/>
<dbReference type="HOGENOM" id="CLU_083252_3_4_9"/>
<dbReference type="UniPathway" id="UPA00665"/>
<dbReference type="Proteomes" id="UP000007726">
    <property type="component" value="Chromosome"/>
</dbReference>
<dbReference type="GO" id="GO:0005886">
    <property type="term" value="C:plasma membrane"/>
    <property type="evidence" value="ECO:0007669"/>
    <property type="project" value="UniProtKB-SubCell"/>
</dbReference>
<dbReference type="GO" id="GO:0004190">
    <property type="term" value="F:aspartic-type endopeptidase activity"/>
    <property type="evidence" value="ECO:0007669"/>
    <property type="project" value="UniProtKB-UniRule"/>
</dbReference>
<dbReference type="GO" id="GO:0006508">
    <property type="term" value="P:proteolysis"/>
    <property type="evidence" value="ECO:0007669"/>
    <property type="project" value="UniProtKB-KW"/>
</dbReference>
<dbReference type="HAMAP" id="MF_00161">
    <property type="entry name" value="LspA"/>
    <property type="match status" value="1"/>
</dbReference>
<dbReference type="InterPro" id="IPR001872">
    <property type="entry name" value="Peptidase_A8"/>
</dbReference>
<dbReference type="NCBIfam" id="TIGR00077">
    <property type="entry name" value="lspA"/>
    <property type="match status" value="1"/>
</dbReference>
<dbReference type="PANTHER" id="PTHR33695">
    <property type="entry name" value="LIPOPROTEIN SIGNAL PEPTIDASE"/>
    <property type="match status" value="1"/>
</dbReference>
<dbReference type="PANTHER" id="PTHR33695:SF1">
    <property type="entry name" value="LIPOPROTEIN SIGNAL PEPTIDASE"/>
    <property type="match status" value="1"/>
</dbReference>
<dbReference type="Pfam" id="PF01252">
    <property type="entry name" value="Peptidase_A8"/>
    <property type="match status" value="1"/>
</dbReference>
<dbReference type="PRINTS" id="PR00781">
    <property type="entry name" value="LIPOSIGPTASE"/>
</dbReference>
<dbReference type="PROSITE" id="PS00855">
    <property type="entry name" value="SPASE_II"/>
    <property type="match status" value="1"/>
</dbReference>